<organism>
    <name type="scientific">Mus musculus</name>
    <name type="common">Mouse</name>
    <dbReference type="NCBI Taxonomy" id="10090"/>
    <lineage>
        <taxon>Eukaryota</taxon>
        <taxon>Metazoa</taxon>
        <taxon>Chordata</taxon>
        <taxon>Craniata</taxon>
        <taxon>Vertebrata</taxon>
        <taxon>Euteleostomi</taxon>
        <taxon>Mammalia</taxon>
        <taxon>Eutheria</taxon>
        <taxon>Euarchontoglires</taxon>
        <taxon>Glires</taxon>
        <taxon>Rodentia</taxon>
        <taxon>Myomorpha</taxon>
        <taxon>Muroidea</taxon>
        <taxon>Muridae</taxon>
        <taxon>Murinae</taxon>
        <taxon>Mus</taxon>
        <taxon>Mus</taxon>
    </lineage>
</organism>
<keyword id="KW-0007">Acetylation</keyword>
<keyword id="KW-0010">Activator</keyword>
<keyword id="KW-0012">Acyltransferase</keyword>
<keyword id="KW-0025">Alternative splicing</keyword>
<keyword id="KW-0156">Chromatin regulator</keyword>
<keyword id="KW-1017">Isopeptide bond</keyword>
<keyword id="KW-0479">Metal-binding</keyword>
<keyword id="KW-0539">Nucleus</keyword>
<keyword id="KW-0597">Phosphoprotein</keyword>
<keyword id="KW-1185">Reference proteome</keyword>
<keyword id="KW-0677">Repeat</keyword>
<keyword id="KW-0678">Repressor</keyword>
<keyword id="KW-0804">Transcription</keyword>
<keyword id="KW-0805">Transcription regulation</keyword>
<keyword id="KW-0808">Transferase</keyword>
<keyword id="KW-0832">Ubl conjugation</keyword>
<keyword id="KW-0862">Zinc</keyword>
<keyword id="KW-0863">Zinc-finger</keyword>
<accession>Q8BRB7</accession>
<accession>E9QK86</accession>
<accession>Q7TNW5</accession>
<accession>Q8BG35</accession>
<accession>Q8C441</accession>
<accession>Q9JKX5</accession>
<name>KAT6B_MOUSE</name>
<gene>
    <name type="primary">Kat6b</name>
    <name type="synonym">Myst4</name>
</gene>
<protein>
    <recommendedName>
        <fullName>Histone acetyltransferase KAT6B</fullName>
        <ecNumber evidence="10">2.3.1.48</ecNumber>
    </recommendedName>
    <alternativeName>
        <fullName>MOZ, YBF2/SAS3, SAS2 and TIP60 protein 4</fullName>
        <shortName>MYST-4</shortName>
    </alternativeName>
    <alternativeName>
        <fullName>Protein querkopf</fullName>
    </alternativeName>
</protein>
<reference key="1">
    <citation type="journal article" date="2000" name="Development">
        <title>Querkopf, a MYST family histone acetyltransferase, is required for normal cerebral cortex development.</title>
        <authorList>
            <person name="Thomas T."/>
            <person name="Voss A.K."/>
            <person name="Chowdhury K."/>
            <person name="Gruss P."/>
        </authorList>
    </citation>
    <scope>NUCLEOTIDE SEQUENCE [MRNA] (ISOFORM 2)</scope>
    <scope>TISSUE SPECIFICITY</scope>
    <scope>DEVELOPMENTAL STAGE</scope>
    <scope>ENZYME ACTIVITY</scope>
    <scope>FUNCTION</scope>
    <scope>DISRUPTION PHENOTYPE</scope>
    <source>
        <tissue>Brain</tissue>
    </source>
</reference>
<reference key="2">
    <citation type="journal article" date="2005" name="Science">
        <title>The transcriptional landscape of the mammalian genome.</title>
        <authorList>
            <person name="Carninci P."/>
            <person name="Kasukawa T."/>
            <person name="Katayama S."/>
            <person name="Gough J."/>
            <person name="Frith M.C."/>
            <person name="Maeda N."/>
            <person name="Oyama R."/>
            <person name="Ravasi T."/>
            <person name="Lenhard B."/>
            <person name="Wells C."/>
            <person name="Kodzius R."/>
            <person name="Shimokawa K."/>
            <person name="Bajic V.B."/>
            <person name="Brenner S.E."/>
            <person name="Batalov S."/>
            <person name="Forrest A.R."/>
            <person name="Zavolan M."/>
            <person name="Davis M.J."/>
            <person name="Wilming L.G."/>
            <person name="Aidinis V."/>
            <person name="Allen J.E."/>
            <person name="Ambesi-Impiombato A."/>
            <person name="Apweiler R."/>
            <person name="Aturaliya R.N."/>
            <person name="Bailey T.L."/>
            <person name="Bansal M."/>
            <person name="Baxter L."/>
            <person name="Beisel K.W."/>
            <person name="Bersano T."/>
            <person name="Bono H."/>
            <person name="Chalk A.M."/>
            <person name="Chiu K.P."/>
            <person name="Choudhary V."/>
            <person name="Christoffels A."/>
            <person name="Clutterbuck D.R."/>
            <person name="Crowe M.L."/>
            <person name="Dalla E."/>
            <person name="Dalrymple B.P."/>
            <person name="de Bono B."/>
            <person name="Della Gatta G."/>
            <person name="di Bernardo D."/>
            <person name="Down T."/>
            <person name="Engstrom P."/>
            <person name="Fagiolini M."/>
            <person name="Faulkner G."/>
            <person name="Fletcher C.F."/>
            <person name="Fukushima T."/>
            <person name="Furuno M."/>
            <person name="Futaki S."/>
            <person name="Gariboldi M."/>
            <person name="Georgii-Hemming P."/>
            <person name="Gingeras T.R."/>
            <person name="Gojobori T."/>
            <person name="Green R.E."/>
            <person name="Gustincich S."/>
            <person name="Harbers M."/>
            <person name="Hayashi Y."/>
            <person name="Hensch T.K."/>
            <person name="Hirokawa N."/>
            <person name="Hill D."/>
            <person name="Huminiecki L."/>
            <person name="Iacono M."/>
            <person name="Ikeo K."/>
            <person name="Iwama A."/>
            <person name="Ishikawa T."/>
            <person name="Jakt M."/>
            <person name="Kanapin A."/>
            <person name="Katoh M."/>
            <person name="Kawasawa Y."/>
            <person name="Kelso J."/>
            <person name="Kitamura H."/>
            <person name="Kitano H."/>
            <person name="Kollias G."/>
            <person name="Krishnan S.P."/>
            <person name="Kruger A."/>
            <person name="Kummerfeld S.K."/>
            <person name="Kurochkin I.V."/>
            <person name="Lareau L.F."/>
            <person name="Lazarevic D."/>
            <person name="Lipovich L."/>
            <person name="Liu J."/>
            <person name="Liuni S."/>
            <person name="McWilliam S."/>
            <person name="Madan Babu M."/>
            <person name="Madera M."/>
            <person name="Marchionni L."/>
            <person name="Matsuda H."/>
            <person name="Matsuzawa S."/>
            <person name="Miki H."/>
            <person name="Mignone F."/>
            <person name="Miyake S."/>
            <person name="Morris K."/>
            <person name="Mottagui-Tabar S."/>
            <person name="Mulder N."/>
            <person name="Nakano N."/>
            <person name="Nakauchi H."/>
            <person name="Ng P."/>
            <person name="Nilsson R."/>
            <person name="Nishiguchi S."/>
            <person name="Nishikawa S."/>
            <person name="Nori F."/>
            <person name="Ohara O."/>
            <person name="Okazaki Y."/>
            <person name="Orlando V."/>
            <person name="Pang K.C."/>
            <person name="Pavan W.J."/>
            <person name="Pavesi G."/>
            <person name="Pesole G."/>
            <person name="Petrovsky N."/>
            <person name="Piazza S."/>
            <person name="Reed J."/>
            <person name="Reid J.F."/>
            <person name="Ring B.Z."/>
            <person name="Ringwald M."/>
            <person name="Rost B."/>
            <person name="Ruan Y."/>
            <person name="Salzberg S.L."/>
            <person name="Sandelin A."/>
            <person name="Schneider C."/>
            <person name="Schoenbach C."/>
            <person name="Sekiguchi K."/>
            <person name="Semple C.A."/>
            <person name="Seno S."/>
            <person name="Sessa L."/>
            <person name="Sheng Y."/>
            <person name="Shibata Y."/>
            <person name="Shimada H."/>
            <person name="Shimada K."/>
            <person name="Silva D."/>
            <person name="Sinclair B."/>
            <person name="Sperling S."/>
            <person name="Stupka E."/>
            <person name="Sugiura K."/>
            <person name="Sultana R."/>
            <person name="Takenaka Y."/>
            <person name="Taki K."/>
            <person name="Tammoja K."/>
            <person name="Tan S.L."/>
            <person name="Tang S."/>
            <person name="Taylor M.S."/>
            <person name="Tegner J."/>
            <person name="Teichmann S.A."/>
            <person name="Ueda H.R."/>
            <person name="van Nimwegen E."/>
            <person name="Verardo R."/>
            <person name="Wei C.L."/>
            <person name="Yagi K."/>
            <person name="Yamanishi H."/>
            <person name="Zabarovsky E."/>
            <person name="Zhu S."/>
            <person name="Zimmer A."/>
            <person name="Hide W."/>
            <person name="Bult C."/>
            <person name="Grimmond S.M."/>
            <person name="Teasdale R.D."/>
            <person name="Liu E.T."/>
            <person name="Brusic V."/>
            <person name="Quackenbush J."/>
            <person name="Wahlestedt C."/>
            <person name="Mattick J.S."/>
            <person name="Hume D.A."/>
            <person name="Kai C."/>
            <person name="Sasaki D."/>
            <person name="Tomaru Y."/>
            <person name="Fukuda S."/>
            <person name="Kanamori-Katayama M."/>
            <person name="Suzuki M."/>
            <person name="Aoki J."/>
            <person name="Arakawa T."/>
            <person name="Iida J."/>
            <person name="Imamura K."/>
            <person name="Itoh M."/>
            <person name="Kato T."/>
            <person name="Kawaji H."/>
            <person name="Kawagashira N."/>
            <person name="Kawashima T."/>
            <person name="Kojima M."/>
            <person name="Kondo S."/>
            <person name="Konno H."/>
            <person name="Nakano K."/>
            <person name="Ninomiya N."/>
            <person name="Nishio T."/>
            <person name="Okada M."/>
            <person name="Plessy C."/>
            <person name="Shibata K."/>
            <person name="Shiraki T."/>
            <person name="Suzuki S."/>
            <person name="Tagami M."/>
            <person name="Waki K."/>
            <person name="Watahiki A."/>
            <person name="Okamura-Oho Y."/>
            <person name="Suzuki H."/>
            <person name="Kawai J."/>
            <person name="Hayashizaki Y."/>
        </authorList>
    </citation>
    <scope>NUCLEOTIDE SEQUENCE [LARGE SCALE MRNA] OF 1-933 (ISOFORM 1)</scope>
    <source>
        <strain>C57BL/6J</strain>
        <tissue>Embryo</tissue>
        <tissue>Head</tissue>
        <tissue>Heart</tissue>
        <tissue>Hippocampus</tissue>
    </source>
</reference>
<reference key="3">
    <citation type="journal article" date="2009" name="PLoS Biol.">
        <title>Lineage-specific biology revealed by a finished genome assembly of the mouse.</title>
        <authorList>
            <person name="Church D.M."/>
            <person name="Goodstadt L."/>
            <person name="Hillier L.W."/>
            <person name="Zody M.C."/>
            <person name="Goldstein S."/>
            <person name="She X."/>
            <person name="Bult C.J."/>
            <person name="Agarwala R."/>
            <person name="Cherry J.L."/>
            <person name="DiCuccio M."/>
            <person name="Hlavina W."/>
            <person name="Kapustin Y."/>
            <person name="Meric P."/>
            <person name="Maglott D."/>
            <person name="Birtle Z."/>
            <person name="Marques A.C."/>
            <person name="Graves T."/>
            <person name="Zhou S."/>
            <person name="Teague B."/>
            <person name="Potamousis K."/>
            <person name="Churas C."/>
            <person name="Place M."/>
            <person name="Herschleb J."/>
            <person name="Runnheim R."/>
            <person name="Forrest D."/>
            <person name="Amos-Landgraf J."/>
            <person name="Schwartz D.C."/>
            <person name="Cheng Z."/>
            <person name="Lindblad-Toh K."/>
            <person name="Eichler E.E."/>
            <person name="Ponting C.P."/>
        </authorList>
    </citation>
    <scope>NUCLEOTIDE SEQUENCE [LARGE SCALE GENOMIC DNA]</scope>
    <source>
        <strain>C57BL/6J</strain>
    </source>
</reference>
<reference key="4">
    <citation type="submission" date="2003-05" db="EMBL/GenBank/DDBJ databases">
        <title>Genomic sequence analysis in the mouse T-complex region.</title>
        <authorList>
            <person name="Brathwaite M.E."/>
            <person name="Waeltz P."/>
            <person name="Qian Y."/>
            <person name="Dudekula D."/>
            <person name="Schlessinger D."/>
            <person name="Nagaraja R."/>
        </authorList>
    </citation>
    <scope>NUCLEOTIDE SEQUENCE [LARGE SCALE GENOMIC DNA] OF 696-1872</scope>
    <source>
        <strain>C57BL/6J</strain>
    </source>
</reference>
<reference key="5">
    <citation type="journal article" date="2011" name="Am. J. Hum. Genet.">
        <title>Whole-exome-sequencing identifies mutations in histone acetyltransferase gene KAT6B in individuals with the Say-Barber-Biesecker variant of Ohdo syndrome.</title>
        <authorList>
            <person name="Clayton-Smith J."/>
            <person name="O'Sullivan J."/>
            <person name="Daly S."/>
            <person name="Bhaskar S."/>
            <person name="Day R."/>
            <person name="Anderson B."/>
            <person name="Voss A.K."/>
            <person name="Thomas T."/>
            <person name="Biesecker L.G."/>
            <person name="Smith P."/>
            <person name="Fryer A."/>
            <person name="Chandler K.E."/>
            <person name="Kerr B."/>
            <person name="Tassabehji M."/>
            <person name="Lynch S.A."/>
            <person name="Krajewska-Walasek M."/>
            <person name="McKee S."/>
            <person name="Smith J."/>
            <person name="Sweeney E."/>
            <person name="Mansour S."/>
            <person name="Mohammed S."/>
            <person name="Donnai D."/>
            <person name="Black G."/>
        </authorList>
    </citation>
    <scope>DISRUPTION PHENOTYPE</scope>
</reference>
<reference key="6">
    <citation type="journal article" date="2013" name="Mol. Cell">
        <title>SIRT5-mediated lysine desuccinylation impacts diverse metabolic pathways.</title>
        <authorList>
            <person name="Park J."/>
            <person name="Chen Y."/>
            <person name="Tishkoff D.X."/>
            <person name="Peng C."/>
            <person name="Tan M."/>
            <person name="Dai L."/>
            <person name="Xie Z."/>
            <person name="Zhang Y."/>
            <person name="Zwaans B.M."/>
            <person name="Skinner M.E."/>
            <person name="Lombard D.B."/>
            <person name="Zhao Y."/>
        </authorList>
    </citation>
    <scope>ACETYLATION [LARGE SCALE ANALYSIS] AT LYS-856 AND LYS-860</scope>
    <scope>IDENTIFICATION BY MASS SPECTROMETRY [LARGE SCALE ANALYSIS]</scope>
    <source>
        <tissue>Embryonic fibroblast</tissue>
    </source>
</reference>
<evidence type="ECO:0000250" key="1"/>
<evidence type="ECO:0000250" key="2">
    <source>
        <dbReference type="UniProtKB" id="Q8WYB5"/>
    </source>
</evidence>
<evidence type="ECO:0000250" key="3">
    <source>
        <dbReference type="UniProtKB" id="Q92794"/>
    </source>
</evidence>
<evidence type="ECO:0000250" key="4">
    <source>
        <dbReference type="UniProtKB" id="Q9H7Z6"/>
    </source>
</evidence>
<evidence type="ECO:0000255" key="5">
    <source>
        <dbReference type="PROSITE-ProRule" id="PRU00146"/>
    </source>
</evidence>
<evidence type="ECO:0000255" key="6">
    <source>
        <dbReference type="PROSITE-ProRule" id="PRU00837"/>
    </source>
</evidence>
<evidence type="ECO:0000255" key="7">
    <source>
        <dbReference type="PROSITE-ProRule" id="PRU01063"/>
    </source>
</evidence>
<evidence type="ECO:0000255" key="8">
    <source>
        <dbReference type="PROSITE-ProRule" id="PRU01358"/>
    </source>
</evidence>
<evidence type="ECO:0000256" key="9">
    <source>
        <dbReference type="SAM" id="MobiDB-lite"/>
    </source>
</evidence>
<evidence type="ECO:0000269" key="10">
    <source>
    </source>
</evidence>
<evidence type="ECO:0000269" key="11">
    <source>
    </source>
</evidence>
<evidence type="ECO:0000305" key="12"/>
<evidence type="ECO:0007744" key="13">
    <source>
    </source>
</evidence>
<proteinExistence type="evidence at protein level"/>
<sequence>MVKLANPLYTEWILEAVQKIKKQKQRPSEERICHAVSTSHGLDKKTVSEQLELSVQDGSVLKVTNKGLASYKDPDNPGRFSSVKPGTFPKPTKGSKGPPCNDLRNVDWNKLLKRAIEGLEEPNGSSLKNIEKYLRSQSDLTGTTNHPAFQQRLRLGAKRAVNNGRLLKEGPQYRVNSGSSDGKGAPQYPSAFPSSLPPVSLLPHEKDQPRADPIPICSFCLGTKESNREKKPEELLSCADCGSSGHPSCLKFCPELTANVKALRWQCIECKTCSACRVQGKNADNMLFCDSCDRGFHMECCDPPLSRMPKGMWICQVCRPKKKGRKLLHEKAAQIKRRYAKPIGRPKNKLKQRLLSVTSDEGSMSAFTGRGSPGRGQKTKVSTTPSSGHAASGKHSSSRLAVTDPTRPGATTKTTTSSTYISASTLKVNKKTKGLIDGLTKFFTPSPDGRRSRGEIIDFSKHYRPRKKVSQKQSCTSHVLATDTDIKISIKQESADVSLVGNKELVTEEDLDVFKQAQELSWEKIECESGVEDCGRYPSVIEFGKYEIQTWYSSPYPQEYARLPKLYLCEFCLKYMKSKNILLRHSKKCGWFHPPANEIYRRKDLSVFEVDGNMSKIYCQNLCLLAKLFLDHKTLYYDVEPFLFYVLTKNDEKGCHLVGYFSKEKLCQQKYNVSCIMIMPQHQRQGFGRFLIDFSYLLSRREGQAGSPEKPLSDLGRLSYLAYWKSVILEYLYRHHERHISIKAISRATGMCPHDIATTLQHLHMIDRRDGRFVIIRREKLILGHMEKLKNCSRPNELDPESLRWTPMLISNAVVSEEEREAEKEAERLMEQASCWEKEEQEILSSRVSSRQSSAKVQSKNKYLHSPERRPVAGERGQLLELSKESSEEEEEEEEEDDEEEEEEEEEESIQTSPPRLTKPQSVSIKRKRPFVVKKKRGRKRRRINSSVTTETISETTEVLNEPFDNSDEERPMPQLEPTCEIPVEEGGRKPVLRKAFPHQPGKKRQTEEEEGEDNHFFKTAALCRKDVDDDAEHLKEGSKDNPEPLKCRQVWPKGAKRGLSKWKQSKERKTGFKLNLYTPPETPMEPEDQVTIEEQKELSEDKGSPVGMEREVTETVDALLPQEGSRREETGIPVSPHKSPGGKVDEEDLIRGEEEGEEEGEEEGEREEQEEEEEVTTEKDLDGAKSKENPEPEISMEKEDPVHLGDHEEDEDEEEEPSHNEDHDADDEDDGHMEAANMERGDLPRETFKDALEGQEAFLDLSIQPSHSNPEVLMNCGVDLTMSCNSEPKELAGDTGTAPESDAEPPEEQTQKQDQKNSDGVDAELEEGGPAAVEIDSETAQAVQSLTQENREHDDTFPDCAETQEACRSLQNYTHTDQSPQIATTLDECQQSDHSSPVSSVHSHPGQSVRSVNSPSVPALENSYAQISPDQTAITVPPLQNMETSPMMDVPSVSDHSQQVVDSGFSDLGSIESTTENYENPSSYDSTMGGSICGNGSSQNSCSYSSLTSSNLTQNSCAVTQQMSNISGSCSMLQQTSISSPPTCSVKSPQGCVVERPPSSSQQLAQCSMAANFTPPMQLADIPETSNANIGLYERMGQSDFGAGHYPQPSATFSLAKLQQLTNTLIDHSLPYSHSAAVTSYANSASLSTPLSNTGLVQLSQSPHSVPGGPQAQATMTPPPNLTPPPMNLPPPLLQRNMAASNIGISHSQRLQTQIASKGHVSMRTKAASLSPAAATHQSQIYGRSQTVAMQGPARTLTMQRGMNMSVNLMPAPAYNVNSVNMNMNTLNAMNGYSMSQPMMNSGYHSNHGYMNQTPQYPMQMQMGMMGSQPYAQQPMQTPPHANMMYTAPGHHGYMNTGMSKQSLNGSYMRR</sequence>
<comment type="function">
    <text evidence="1 10">Histone acetyltransferase which may be involved in both positive and negative regulation of transcription. Required for RUNX2-dependent transcriptional activation. Component of the MOZ/MORF complex which has a histone H3 acetyltransferase activity (By similarity). Involved in cerebral cortex development.</text>
</comment>
<comment type="catalytic activity">
    <reaction evidence="10">
        <text>L-lysyl-[protein] + acetyl-CoA = N(6)-acetyl-L-lysyl-[protein] + CoA + H(+)</text>
        <dbReference type="Rhea" id="RHEA:45948"/>
        <dbReference type="Rhea" id="RHEA-COMP:9752"/>
        <dbReference type="Rhea" id="RHEA-COMP:10731"/>
        <dbReference type="ChEBI" id="CHEBI:15378"/>
        <dbReference type="ChEBI" id="CHEBI:29969"/>
        <dbReference type="ChEBI" id="CHEBI:57287"/>
        <dbReference type="ChEBI" id="CHEBI:57288"/>
        <dbReference type="ChEBI" id="CHEBI:61930"/>
        <dbReference type="EC" id="2.3.1.48"/>
    </reaction>
</comment>
<comment type="subunit">
    <text evidence="2">Component of the MOZ/MORF complex composed at least of ING5, KAT6A, KAT6B, MEAF6 and one of BRPF1, BRD1/BRPF2 and BRPF3. Interacts with RUNX1 and RUNX2.</text>
</comment>
<comment type="subcellular location">
    <subcellularLocation>
        <location evidence="12">Nucleus</location>
    </subcellularLocation>
</comment>
<comment type="alternative products">
    <event type="alternative splicing"/>
    <isoform>
        <id>Q8BRB7-1</id>
        <name>1</name>
        <sequence type="displayed"/>
    </isoform>
    <isoform>
        <id>Q8BRB7-2</id>
        <name>2</name>
        <sequence type="described" ref="VSP_014592"/>
    </isoform>
</comment>
<comment type="tissue specificity">
    <text evidence="10">Ubiquitously expressed.</text>
</comment>
<comment type="developmental stage">
    <text evidence="10">Strongly expressed in the ventricular zone of the developing cerebral cortex.</text>
</comment>
<comment type="domain">
    <text evidence="1">The N-terminus is involved in transcriptional activation while the C-terminus is involved in transcriptional repression.</text>
</comment>
<comment type="PTM">
    <text evidence="4">Autoacetylation at Lys-633 is required for proper function.</text>
</comment>
<comment type="disruption phenotype">
    <text evidence="10 11">Mice have a low body weight, craniofacial abnormalities, and defects in cortex development. Mice carrying a gene trap insertion in the gene, produces approximately 5% of the normal amount of mRNA. The hypomorphic mutant displays a number of defects that mirror SBBYSS syndrome, although the phenotype is milder. Mice are of normal size at birth but fail to thrive and have brain developmental defects as well as craniofacial defects. Observed abnormalities include short and narrow palpebral fissures, low set ears, and malocclusion. Similar to individuals with SBBYSS, mice carrying the gene trap insertion have long, slender feet and disproportionally long first digits.</text>
</comment>
<comment type="similarity">
    <text evidence="12">Belongs to the MYST (SAS/MOZ) family.</text>
</comment>
<comment type="sequence caution" evidence="12">
    <conflict type="miscellaneous discrepancy">
        <sequence resource="EMBL-CDS" id="BAC33305"/>
    </conflict>
    <text>Probable intron retention.</text>
</comment>
<comment type="sequence caution" evidence="12">
    <conflict type="miscellaneous discrepancy">
        <sequence resource="EMBL-CDS" id="BAC34930"/>
    </conflict>
    <text>Probable intron retention.</text>
</comment>
<comment type="sequence caution" evidence="12">
    <conflict type="miscellaneous discrepancy">
        <sequence resource="EMBL-CDS" id="BAC38771"/>
    </conflict>
    <text>Probable intron retention.</text>
</comment>
<dbReference type="EC" id="2.3.1.48" evidence="10"/>
<dbReference type="EMBL" id="AF222800">
    <property type="protein sequence ID" value="AAF26744.1"/>
    <property type="molecule type" value="mRNA"/>
</dbReference>
<dbReference type="EMBL" id="AK045188">
    <property type="protein sequence ID" value="BAC32253.2"/>
    <property type="molecule type" value="mRNA"/>
</dbReference>
<dbReference type="EMBL" id="AK048336">
    <property type="protein sequence ID" value="BAC33305.1"/>
    <property type="status" value="ALT_SEQ"/>
    <property type="molecule type" value="mRNA"/>
</dbReference>
<dbReference type="EMBL" id="AK052307">
    <property type="protein sequence ID" value="BAC34930.1"/>
    <property type="status" value="ALT_SEQ"/>
    <property type="molecule type" value="mRNA"/>
</dbReference>
<dbReference type="EMBL" id="AK083123">
    <property type="protein sequence ID" value="BAC38771.1"/>
    <property type="status" value="ALT_SEQ"/>
    <property type="molecule type" value="mRNA"/>
</dbReference>
<dbReference type="EMBL" id="AC115122">
    <property type="status" value="NOT_ANNOTATED_CDS"/>
    <property type="molecule type" value="Genomic_DNA"/>
</dbReference>
<dbReference type="EMBL" id="AC148978">
    <property type="status" value="NOT_ANNOTATED_CDS"/>
    <property type="molecule type" value="Genomic_DNA"/>
</dbReference>
<dbReference type="EMBL" id="AY294423">
    <property type="protein sequence ID" value="AAQ01512.1"/>
    <property type="molecule type" value="Genomic_DNA"/>
</dbReference>
<dbReference type="CCDS" id="CCDS59615.1">
    <molecule id="Q8BRB7-2"/>
</dbReference>
<dbReference type="RefSeq" id="NP_001192170.1">
    <molecule id="Q8BRB7-2"/>
    <property type="nucleotide sequence ID" value="NM_001205241.2"/>
</dbReference>
<dbReference type="RefSeq" id="NP_001395624.1">
    <molecule id="Q8BRB7-2"/>
    <property type="nucleotide sequence ID" value="NM_001408695.1"/>
</dbReference>
<dbReference type="RefSeq" id="NP_001395625.1">
    <molecule id="Q8BRB7-1"/>
    <property type="nucleotide sequence ID" value="NM_001408696.1"/>
</dbReference>
<dbReference type="RefSeq" id="NP_059507.2">
    <molecule id="Q8BRB7-2"/>
    <property type="nucleotide sequence ID" value="NM_017479.4"/>
</dbReference>
<dbReference type="RefSeq" id="XP_006519331.1">
    <property type="nucleotide sequence ID" value="XM_006519268.3"/>
</dbReference>
<dbReference type="RefSeq" id="XP_017171572.1">
    <property type="nucleotide sequence ID" value="XM_017316083.1"/>
</dbReference>
<dbReference type="RefSeq" id="XP_036014651.1">
    <molecule id="Q8BRB7-2"/>
    <property type="nucleotide sequence ID" value="XM_036158758.1"/>
</dbReference>
<dbReference type="SMR" id="Q8BRB7"/>
<dbReference type="BioGRID" id="207589">
    <property type="interactions" value="5"/>
</dbReference>
<dbReference type="ComplexPortal" id="CPX-803">
    <property type="entry name" value="MORF1 histone acetyltransferase complex"/>
</dbReference>
<dbReference type="ComplexPortal" id="CPX-804">
    <property type="entry name" value="MORF3 histone acetyltransferase complex"/>
</dbReference>
<dbReference type="ComplexPortal" id="CPX-805">
    <property type="entry name" value="MORF2 histone acetyltransferase complex"/>
</dbReference>
<dbReference type="FunCoup" id="Q8BRB7">
    <property type="interactions" value="2667"/>
</dbReference>
<dbReference type="IntAct" id="Q8BRB7">
    <property type="interactions" value="1"/>
</dbReference>
<dbReference type="MINT" id="Q8BRB7"/>
<dbReference type="STRING" id="10090.ENSMUSP00000138377"/>
<dbReference type="GlyGen" id="Q8BRB7">
    <property type="glycosylation" value="2 sites, 1 O-linked glycan (2 sites)"/>
</dbReference>
<dbReference type="iPTMnet" id="Q8BRB7"/>
<dbReference type="PhosphoSitePlus" id="Q8BRB7"/>
<dbReference type="PaxDb" id="10090-ENSMUSP00000138421"/>
<dbReference type="ProteomicsDB" id="269177">
    <molecule id="Q8BRB7-1"/>
</dbReference>
<dbReference type="ProteomicsDB" id="269178">
    <molecule id="Q8BRB7-2"/>
</dbReference>
<dbReference type="Antibodypedia" id="1807">
    <property type="antibodies" value="78 antibodies from 22 providers"/>
</dbReference>
<dbReference type="DNASU" id="54169"/>
<dbReference type="Ensembl" id="ENSMUST00000069648.14">
    <molecule id="Q8BRB7-1"/>
    <property type="protein sequence ID" value="ENSMUSP00000066693.8"/>
    <property type="gene ID" value="ENSMUSG00000021767.21"/>
</dbReference>
<dbReference type="Ensembl" id="ENSMUST00000182405.9">
    <molecule id="Q8BRB7-2"/>
    <property type="protein sequence ID" value="ENSMUSP00000138377.2"/>
    <property type="gene ID" value="ENSMUSG00000021767.21"/>
</dbReference>
<dbReference type="Ensembl" id="ENSMUST00000182855.8">
    <molecule id="Q8BRB7-2"/>
    <property type="protein sequence ID" value="ENSMUSP00000138511.2"/>
    <property type="gene ID" value="ENSMUSG00000021767.21"/>
</dbReference>
<dbReference type="Ensembl" id="ENSMUST00000182964.3">
    <molecule id="Q8BRB7-1"/>
    <property type="protein sequence ID" value="ENSMUSP00000138421.2"/>
    <property type="gene ID" value="ENSMUSG00000021767.21"/>
</dbReference>
<dbReference type="GeneID" id="54169"/>
<dbReference type="KEGG" id="mmu:54169"/>
<dbReference type="UCSC" id="uc007slg.2">
    <molecule id="Q8BRB7-2"/>
    <property type="organism name" value="mouse"/>
</dbReference>
<dbReference type="UCSC" id="uc007slk.1">
    <molecule id="Q8BRB7-1"/>
    <property type="organism name" value="mouse"/>
</dbReference>
<dbReference type="AGR" id="MGI:1858746"/>
<dbReference type="CTD" id="23522"/>
<dbReference type="MGI" id="MGI:1858746">
    <property type="gene designation" value="Kat6b"/>
</dbReference>
<dbReference type="VEuPathDB" id="HostDB:ENSMUSG00000021767"/>
<dbReference type="eggNOG" id="KOG2747">
    <property type="taxonomic scope" value="Eukaryota"/>
</dbReference>
<dbReference type="GeneTree" id="ENSGT00940000157372"/>
<dbReference type="HOGENOM" id="CLU_001232_1_1_1"/>
<dbReference type="InParanoid" id="Q8BRB7"/>
<dbReference type="OrthoDB" id="787137at2759"/>
<dbReference type="PhylomeDB" id="Q8BRB7"/>
<dbReference type="TreeFam" id="TF106483"/>
<dbReference type="Reactome" id="R-MMU-3214847">
    <property type="pathway name" value="HATs acetylate histones"/>
</dbReference>
<dbReference type="BioGRID-ORCS" id="54169">
    <property type="hits" value="1 hit in 78 CRISPR screens"/>
</dbReference>
<dbReference type="ChiTaRS" id="Kat6b">
    <property type="organism name" value="mouse"/>
</dbReference>
<dbReference type="PRO" id="PR:Q8BRB7"/>
<dbReference type="Proteomes" id="UP000000589">
    <property type="component" value="Chromosome 14"/>
</dbReference>
<dbReference type="RNAct" id="Q8BRB7">
    <property type="molecule type" value="protein"/>
</dbReference>
<dbReference type="Bgee" id="ENSMUSG00000021767">
    <property type="expression patterns" value="Expressed in animal zygote and 78 other cell types or tissues"/>
</dbReference>
<dbReference type="ExpressionAtlas" id="Q8BRB7">
    <property type="expression patterns" value="baseline and differential"/>
</dbReference>
<dbReference type="GO" id="GO:0070776">
    <property type="term" value="C:MOZ/MORF histone acetyltransferase complex"/>
    <property type="evidence" value="ECO:0000250"/>
    <property type="project" value="UniProtKB"/>
</dbReference>
<dbReference type="GO" id="GO:0000786">
    <property type="term" value="C:nucleosome"/>
    <property type="evidence" value="ECO:0007669"/>
    <property type="project" value="InterPro"/>
</dbReference>
<dbReference type="GO" id="GO:0005634">
    <property type="term" value="C:nucleus"/>
    <property type="evidence" value="ECO:0000266"/>
    <property type="project" value="ComplexPortal"/>
</dbReference>
<dbReference type="GO" id="GO:0003677">
    <property type="term" value="F:DNA binding"/>
    <property type="evidence" value="ECO:0007669"/>
    <property type="project" value="InterPro"/>
</dbReference>
<dbReference type="GO" id="GO:0004402">
    <property type="term" value="F:histone acetyltransferase activity"/>
    <property type="evidence" value="ECO:0000314"/>
    <property type="project" value="MGI"/>
</dbReference>
<dbReference type="GO" id="GO:0061733">
    <property type="term" value="F:protein-lysine-acetyltransferase activity"/>
    <property type="evidence" value="ECO:0000250"/>
    <property type="project" value="UniProtKB"/>
</dbReference>
<dbReference type="GO" id="GO:0003713">
    <property type="term" value="F:transcription coactivator activity"/>
    <property type="evidence" value="ECO:0000250"/>
    <property type="project" value="UniProtKB"/>
</dbReference>
<dbReference type="GO" id="GO:0008270">
    <property type="term" value="F:zinc ion binding"/>
    <property type="evidence" value="ECO:0007669"/>
    <property type="project" value="UniProtKB-KW"/>
</dbReference>
<dbReference type="GO" id="GO:1990830">
    <property type="term" value="P:cellular response to leukemia inhibitory factor"/>
    <property type="evidence" value="ECO:0000270"/>
    <property type="project" value="MGI"/>
</dbReference>
<dbReference type="GO" id="GO:0045892">
    <property type="term" value="P:negative regulation of DNA-templated transcription"/>
    <property type="evidence" value="ECO:0000250"/>
    <property type="project" value="UniProtKB"/>
</dbReference>
<dbReference type="GO" id="GO:0006334">
    <property type="term" value="P:nucleosome assembly"/>
    <property type="evidence" value="ECO:0007669"/>
    <property type="project" value="InterPro"/>
</dbReference>
<dbReference type="GO" id="GO:0045893">
    <property type="term" value="P:positive regulation of DNA-templated transcription"/>
    <property type="evidence" value="ECO:0000250"/>
    <property type="project" value="UniProtKB"/>
</dbReference>
<dbReference type="GO" id="GO:0050793">
    <property type="term" value="P:regulation of developmental process"/>
    <property type="evidence" value="ECO:0000303"/>
    <property type="project" value="ComplexPortal"/>
</dbReference>
<dbReference type="GO" id="GO:0006355">
    <property type="term" value="P:regulation of DNA-templated transcription"/>
    <property type="evidence" value="ECO:0000266"/>
    <property type="project" value="ComplexPortal"/>
</dbReference>
<dbReference type="GO" id="GO:1903706">
    <property type="term" value="P:regulation of hemopoiesis"/>
    <property type="evidence" value="ECO:0000303"/>
    <property type="project" value="ComplexPortal"/>
</dbReference>
<dbReference type="CDD" id="cd15689">
    <property type="entry name" value="PHD1_MORF"/>
    <property type="match status" value="1"/>
</dbReference>
<dbReference type="CDD" id="cd15527">
    <property type="entry name" value="PHD2_KAT6A_6B"/>
    <property type="match status" value="1"/>
</dbReference>
<dbReference type="FunFam" id="1.10.10.10:FF:000123">
    <property type="entry name" value="Histone acetyltransferase"/>
    <property type="match status" value="1"/>
</dbReference>
<dbReference type="FunFam" id="1.10.10.10:FF:000132">
    <property type="entry name" value="Histone acetyltransferase"/>
    <property type="match status" value="1"/>
</dbReference>
<dbReference type="FunFam" id="3.30.40.10:FF:000035">
    <property type="entry name" value="Histone acetyltransferase"/>
    <property type="match status" value="1"/>
</dbReference>
<dbReference type="FunFam" id="3.30.60.60:FF:000002">
    <property type="entry name" value="Histone acetyltransferase"/>
    <property type="match status" value="1"/>
</dbReference>
<dbReference type="FunFam" id="3.40.630.30:FF:000001">
    <property type="entry name" value="Histone acetyltransferase"/>
    <property type="match status" value="1"/>
</dbReference>
<dbReference type="Gene3D" id="3.40.630.30">
    <property type="match status" value="1"/>
</dbReference>
<dbReference type="Gene3D" id="3.30.60.60">
    <property type="entry name" value="N-acetyl transferase-like"/>
    <property type="match status" value="1"/>
</dbReference>
<dbReference type="Gene3D" id="1.10.10.10">
    <property type="entry name" value="Winged helix-like DNA-binding domain superfamily/Winged helix DNA-binding domain"/>
    <property type="match status" value="2"/>
</dbReference>
<dbReference type="Gene3D" id="3.30.40.10">
    <property type="entry name" value="Zinc/RING finger domain, C3HC4 (zinc finger)"/>
    <property type="match status" value="1"/>
</dbReference>
<dbReference type="InterPro" id="IPR016181">
    <property type="entry name" value="Acyl_CoA_acyltransferase"/>
</dbReference>
<dbReference type="InterPro" id="IPR002717">
    <property type="entry name" value="HAT_MYST-type"/>
</dbReference>
<dbReference type="InterPro" id="IPR005818">
    <property type="entry name" value="Histone_H1/H5_H15"/>
</dbReference>
<dbReference type="InterPro" id="IPR050603">
    <property type="entry name" value="MYST_HAT"/>
</dbReference>
<dbReference type="InterPro" id="IPR048589">
    <property type="entry name" value="SAMD1-like_WH"/>
</dbReference>
<dbReference type="InterPro" id="IPR036388">
    <property type="entry name" value="WH-like_DNA-bd_sf"/>
</dbReference>
<dbReference type="InterPro" id="IPR036390">
    <property type="entry name" value="WH_DNA-bd_sf"/>
</dbReference>
<dbReference type="InterPro" id="IPR040706">
    <property type="entry name" value="Zf-MYST"/>
</dbReference>
<dbReference type="InterPro" id="IPR011011">
    <property type="entry name" value="Znf_FYVE_PHD"/>
</dbReference>
<dbReference type="InterPro" id="IPR001965">
    <property type="entry name" value="Znf_PHD"/>
</dbReference>
<dbReference type="InterPro" id="IPR019787">
    <property type="entry name" value="Znf_PHD-finger"/>
</dbReference>
<dbReference type="InterPro" id="IPR013083">
    <property type="entry name" value="Znf_RING/FYVE/PHD"/>
</dbReference>
<dbReference type="PANTHER" id="PTHR10615">
    <property type="entry name" value="HISTONE ACETYLTRANSFERASE"/>
    <property type="match status" value="1"/>
</dbReference>
<dbReference type="PANTHER" id="PTHR10615:SF73">
    <property type="entry name" value="HISTONE ACETYLTRANSFERASE KAT6B"/>
    <property type="match status" value="1"/>
</dbReference>
<dbReference type="Pfam" id="PF00538">
    <property type="entry name" value="Linker_histone"/>
    <property type="match status" value="1"/>
</dbReference>
<dbReference type="Pfam" id="PF01853">
    <property type="entry name" value="MOZ_SAS"/>
    <property type="match status" value="1"/>
</dbReference>
<dbReference type="Pfam" id="PF00628">
    <property type="entry name" value="PHD"/>
    <property type="match status" value="1"/>
</dbReference>
<dbReference type="Pfam" id="PF21524">
    <property type="entry name" value="SAMD1_WH"/>
    <property type="match status" value="1"/>
</dbReference>
<dbReference type="Pfam" id="PF17772">
    <property type="entry name" value="zf-MYST"/>
    <property type="match status" value="1"/>
</dbReference>
<dbReference type="SMART" id="SM00526">
    <property type="entry name" value="H15"/>
    <property type="match status" value="1"/>
</dbReference>
<dbReference type="SMART" id="SM00249">
    <property type="entry name" value="PHD"/>
    <property type="match status" value="2"/>
</dbReference>
<dbReference type="SUPFAM" id="SSF55729">
    <property type="entry name" value="Acyl-CoA N-acyltransferases (Nat)"/>
    <property type="match status" value="1"/>
</dbReference>
<dbReference type="SUPFAM" id="SSF57903">
    <property type="entry name" value="FYVE/PHD zinc finger"/>
    <property type="match status" value="1"/>
</dbReference>
<dbReference type="SUPFAM" id="SSF46785">
    <property type="entry name" value="Winged helix' DNA-binding domain"/>
    <property type="match status" value="1"/>
</dbReference>
<dbReference type="PROSITE" id="PS51504">
    <property type="entry name" value="H15"/>
    <property type="match status" value="1"/>
</dbReference>
<dbReference type="PROSITE" id="PS51726">
    <property type="entry name" value="MYST_HAT"/>
    <property type="match status" value="1"/>
</dbReference>
<dbReference type="PROSITE" id="PS52014">
    <property type="entry name" value="SAMD1_WH"/>
    <property type="match status" value="1"/>
</dbReference>
<dbReference type="PROSITE" id="PS01359">
    <property type="entry name" value="ZF_PHD_1"/>
    <property type="match status" value="1"/>
</dbReference>
<dbReference type="PROSITE" id="PS50016">
    <property type="entry name" value="ZF_PHD_2"/>
    <property type="match status" value="2"/>
</dbReference>
<feature type="chain" id="PRO_0000051577" description="Histone acetyltransferase KAT6B">
    <location>
        <begin position="1"/>
        <end position="1872"/>
    </location>
</feature>
<feature type="domain" description="SAMD1-like winged helix (WH)" evidence="8">
    <location>
        <begin position="1"/>
        <end position="77"/>
    </location>
</feature>
<feature type="domain" description="H15" evidence="6">
    <location>
        <begin position="104"/>
        <end position="177"/>
    </location>
</feature>
<feature type="domain" description="MYST-type HAT" evidence="7">
    <location>
        <begin position="533"/>
        <end position="807"/>
    </location>
</feature>
<feature type="zinc finger region" description="PHD-type 1" evidence="5">
    <location>
        <begin position="214"/>
        <end position="273"/>
    </location>
</feature>
<feature type="zinc finger region" description="PHD-type 2" evidence="5">
    <location>
        <begin position="270"/>
        <end position="321"/>
    </location>
</feature>
<feature type="zinc finger region" description="C2HC MYST-type" evidence="7">
    <location>
        <begin position="566"/>
        <end position="591"/>
    </location>
</feature>
<feature type="region of interest" description="Disordered" evidence="9">
    <location>
        <begin position="70"/>
        <end position="103"/>
    </location>
</feature>
<feature type="region of interest" description="Disordered" evidence="9">
    <location>
        <begin position="168"/>
        <end position="207"/>
    </location>
</feature>
<feature type="region of interest" description="Disordered" evidence="9">
    <location>
        <begin position="361"/>
        <end position="417"/>
    </location>
</feature>
<feature type="region of interest" description="Negatively regulates HAT activity" evidence="1">
    <location>
        <begin position="362"/>
        <end position="535"/>
    </location>
</feature>
<feature type="region of interest" description="Catalytic" evidence="1">
    <location>
        <begin position="536"/>
        <end position="826"/>
    </location>
</feature>
<feature type="region of interest" description="Interaction with BRPF1" evidence="1">
    <location>
        <begin position="570"/>
        <end position="826"/>
    </location>
</feature>
<feature type="region of interest" description="Disordered" evidence="9">
    <location>
        <begin position="846"/>
        <end position="1018"/>
    </location>
</feature>
<feature type="region of interest" description="Disordered" evidence="9">
    <location>
        <begin position="1031"/>
        <end position="1252"/>
    </location>
</feature>
<feature type="region of interest" description="Disordered" evidence="9">
    <location>
        <begin position="1283"/>
        <end position="1358"/>
    </location>
</feature>
<feature type="region of interest" description="Interaction with RUNX1 and RUNX2" evidence="1">
    <location>
        <begin position="1359"/>
        <end position="1872"/>
    </location>
</feature>
<feature type="region of interest" description="Disordered" evidence="9">
    <location>
        <begin position="1388"/>
        <end position="1418"/>
    </location>
</feature>
<feature type="compositionally biased region" description="Low complexity" evidence="9">
    <location>
        <begin position="189"/>
        <end position="202"/>
    </location>
</feature>
<feature type="compositionally biased region" description="Low complexity" evidence="9">
    <location>
        <begin position="386"/>
        <end position="395"/>
    </location>
</feature>
<feature type="compositionally biased region" description="Low complexity" evidence="9">
    <location>
        <begin position="846"/>
        <end position="860"/>
    </location>
</feature>
<feature type="compositionally biased region" description="Acidic residues" evidence="9">
    <location>
        <begin position="887"/>
        <end position="909"/>
    </location>
</feature>
<feature type="compositionally biased region" description="Polar residues" evidence="9">
    <location>
        <begin position="910"/>
        <end position="924"/>
    </location>
</feature>
<feature type="compositionally biased region" description="Basic residues" evidence="9">
    <location>
        <begin position="925"/>
        <end position="944"/>
    </location>
</feature>
<feature type="compositionally biased region" description="Low complexity" evidence="9">
    <location>
        <begin position="946"/>
        <end position="959"/>
    </location>
</feature>
<feature type="compositionally biased region" description="Basic residues" evidence="9">
    <location>
        <begin position="991"/>
        <end position="1004"/>
    </location>
</feature>
<feature type="compositionally biased region" description="Basic and acidic residues" evidence="9">
    <location>
        <begin position="1031"/>
        <end position="1047"/>
    </location>
</feature>
<feature type="compositionally biased region" description="Basic and acidic residues" evidence="9">
    <location>
        <begin position="1094"/>
        <end position="1114"/>
    </location>
</feature>
<feature type="compositionally biased region" description="Acidic residues" evidence="9">
    <location>
        <begin position="1155"/>
        <end position="1176"/>
    </location>
</feature>
<feature type="compositionally biased region" description="Basic and acidic residues" evidence="9">
    <location>
        <begin position="1177"/>
        <end position="1207"/>
    </location>
</feature>
<feature type="compositionally biased region" description="Acidic residues" evidence="9">
    <location>
        <begin position="1208"/>
        <end position="1217"/>
    </location>
</feature>
<feature type="compositionally biased region" description="Basic and acidic residues" evidence="9">
    <location>
        <begin position="1238"/>
        <end position="1252"/>
    </location>
</feature>
<feature type="compositionally biased region" description="Basic and acidic residues" evidence="9">
    <location>
        <begin position="1310"/>
        <end position="1320"/>
    </location>
</feature>
<feature type="compositionally biased region" description="Polar residues" evidence="9">
    <location>
        <begin position="1339"/>
        <end position="1349"/>
    </location>
</feature>
<feature type="compositionally biased region" description="Low complexity" evidence="9">
    <location>
        <begin position="1393"/>
        <end position="1410"/>
    </location>
</feature>
<feature type="active site" description="Proton donor/acceptor" evidence="4">
    <location>
        <position position="709"/>
    </location>
</feature>
<feature type="binding site" evidence="3">
    <location>
        <begin position="674"/>
        <end position="678"/>
    </location>
    <ligand>
        <name>acetyl-CoA</name>
        <dbReference type="ChEBI" id="CHEBI:57288"/>
    </ligand>
</feature>
<feature type="binding site" evidence="3">
    <location>
        <begin position="683"/>
        <end position="689"/>
    </location>
    <ligand>
        <name>acetyl-CoA</name>
        <dbReference type="ChEBI" id="CHEBI:57288"/>
    </ligand>
</feature>
<feature type="binding site" evidence="3">
    <location>
        <position position="713"/>
    </location>
    <ligand>
        <name>acetyl-CoA</name>
        <dbReference type="ChEBI" id="CHEBI:57288"/>
    </ligand>
</feature>
<feature type="modified residue" description="Phosphoserine" evidence="2">
    <location>
        <position position="356"/>
    </location>
</feature>
<feature type="modified residue" description="N6-acetyllysine; by autocatalysis" evidence="3">
    <location>
        <position position="633"/>
    </location>
</feature>
<feature type="modified residue" description="N6-acetyllysine" evidence="13">
    <location>
        <position position="856"/>
    </location>
</feature>
<feature type="modified residue" description="N6-acetyllysine" evidence="13">
    <location>
        <position position="860"/>
    </location>
</feature>
<feature type="modified residue" description="N6-acetyllysine" evidence="2">
    <location>
        <position position="862"/>
    </location>
</feature>
<feature type="modified residue" description="Phosphoserine" evidence="2">
    <location>
        <position position="866"/>
    </location>
</feature>
<feature type="cross-link" description="Glycyl lysine isopeptide (Lys-Gly) (interchain with G-Cter in SUMO2)" evidence="2">
    <location>
        <position position="491"/>
    </location>
</feature>
<feature type="splice variant" id="VSP_014592" description="In isoform 2." evidence="10">
    <location>
        <begin position="374"/>
        <end position="482"/>
    </location>
</feature>
<feature type="sequence conflict" description="In Ref. 1; AAF26744." evidence="12" ref="1">
    <original>E</original>
    <variation>Q</variation>
    <location>
        <position position="1033"/>
    </location>
</feature>
<feature type="sequence conflict" description="In Ref. 1; AAF26744." evidence="12" ref="1">
    <original>V</original>
    <variation>I</variation>
    <location>
        <position position="1418"/>
    </location>
</feature>